<proteinExistence type="inferred from homology"/>
<sequence length="284" mass="32180">MAVFCASSARLALPTLLRNIYRSEFASELHSSRPVSLRQVSYSHNRFNNGRSFASLSRLLASQSGSHMNPQPSSQPIITESSSEQLDAAEDGSIVGAPTKDAAVNRDRRDPDKPTRKTKKAKFASSQTEPDATSAKSSRDKKHVRSDRASPDYKPKKKKEPWQIQKDALKKKFKEGWNPSKKLSPDALEGIRHLHAVAPDKFTTPVLAEQFQVSPEAIRRILKSKWRPSETEMEDRRKRWEKRHDRIWSHLSELGLRPKTKRTEALDDSNILYGKGEEGNKPSE</sequence>
<protein>
    <recommendedName>
        <fullName>Required for respiratory growth protein 9, mitochondrial</fullName>
    </recommendedName>
</protein>
<organism>
    <name type="scientific">Aspergillus flavus (strain ATCC 200026 / FGSC A1120 / IAM 13836 / NRRL 3357 / JCM 12722 / SRRC 167)</name>
    <dbReference type="NCBI Taxonomy" id="332952"/>
    <lineage>
        <taxon>Eukaryota</taxon>
        <taxon>Fungi</taxon>
        <taxon>Dikarya</taxon>
        <taxon>Ascomycota</taxon>
        <taxon>Pezizomycotina</taxon>
        <taxon>Eurotiomycetes</taxon>
        <taxon>Eurotiomycetidae</taxon>
        <taxon>Eurotiales</taxon>
        <taxon>Aspergillaceae</taxon>
        <taxon>Aspergillus</taxon>
        <taxon>Aspergillus subgen. Circumdati</taxon>
    </lineage>
</organism>
<name>RRG9_ASPFN</name>
<comment type="function">
    <text evidence="1">Required for respiratory activity and maintenance and expression of the mitochondrial genome.</text>
</comment>
<comment type="subcellular location">
    <subcellularLocation>
        <location evidence="1">Mitochondrion</location>
    </subcellularLocation>
</comment>
<comment type="similarity">
    <text evidence="4">Belongs to the RRG9 family.</text>
</comment>
<reference key="1">
    <citation type="journal article" date="2015" name="Genome Announc.">
        <title>Genome sequence of Aspergillus flavus NRRL 3357, a strain that causes aflatoxin contamination of food and feed.</title>
        <authorList>
            <person name="Nierman W.C."/>
            <person name="Yu J."/>
            <person name="Fedorova-Abrams N.D."/>
            <person name="Losada L."/>
            <person name="Cleveland T.E."/>
            <person name="Bhatnagar D."/>
            <person name="Bennett J.W."/>
            <person name="Dean R."/>
            <person name="Payne G.A."/>
        </authorList>
    </citation>
    <scope>NUCLEOTIDE SEQUENCE [LARGE SCALE GENOMIC DNA]</scope>
    <source>
        <strain>ATCC 200026 / FGSC A1120 / IAM 13836 / NRRL 3357 / JCM 12722 / SRRC 167</strain>
    </source>
</reference>
<gene>
    <name type="primary">rrg9</name>
    <name type="ORF">AFLA_135570</name>
</gene>
<dbReference type="EMBL" id="EQ963478">
    <property type="protein sequence ID" value="EED50794.1"/>
    <property type="molecule type" value="Genomic_DNA"/>
</dbReference>
<dbReference type="RefSeq" id="XP_002379570.1">
    <property type="nucleotide sequence ID" value="XM_002379529.1"/>
</dbReference>
<dbReference type="SMR" id="B8NHF2"/>
<dbReference type="STRING" id="332952.B8NHF2"/>
<dbReference type="EnsemblFungi" id="EED50794">
    <property type="protein sequence ID" value="EED50794"/>
    <property type="gene ID" value="AFLA_135570"/>
</dbReference>
<dbReference type="VEuPathDB" id="FungiDB:AFLA_005912"/>
<dbReference type="eggNOG" id="ENOG502S7IA">
    <property type="taxonomic scope" value="Eukaryota"/>
</dbReference>
<dbReference type="HOGENOM" id="CLU_047598_3_0_1"/>
<dbReference type="OMA" id="KPEKWQI"/>
<dbReference type="GO" id="GO:0005739">
    <property type="term" value="C:mitochondrion"/>
    <property type="evidence" value="ECO:0007669"/>
    <property type="project" value="UniProtKB-SubCell"/>
</dbReference>
<dbReference type="GO" id="GO:0005634">
    <property type="term" value="C:nucleus"/>
    <property type="evidence" value="ECO:0007669"/>
    <property type="project" value="TreeGrafter"/>
</dbReference>
<dbReference type="InterPro" id="IPR010487">
    <property type="entry name" value="NGRN/Rrg9"/>
</dbReference>
<dbReference type="PANTHER" id="PTHR13475">
    <property type="entry name" value="NEUGRIN"/>
    <property type="match status" value="1"/>
</dbReference>
<dbReference type="PANTHER" id="PTHR13475:SF3">
    <property type="entry name" value="NEUGRIN"/>
    <property type="match status" value="1"/>
</dbReference>
<dbReference type="Pfam" id="PF06413">
    <property type="entry name" value="Neugrin"/>
    <property type="match status" value="1"/>
</dbReference>
<feature type="transit peptide" description="Mitochondrion" evidence="2">
    <location>
        <begin position="1"/>
        <end position="53"/>
    </location>
</feature>
<feature type="chain" id="PRO_0000407938" description="Required for respiratory growth protein 9, mitochondrial">
    <location>
        <begin position="54"/>
        <end position="284"/>
    </location>
</feature>
<feature type="region of interest" description="Disordered" evidence="3">
    <location>
        <begin position="62"/>
        <end position="184"/>
    </location>
</feature>
<feature type="region of interest" description="Disordered" evidence="3">
    <location>
        <begin position="258"/>
        <end position="284"/>
    </location>
</feature>
<feature type="compositionally biased region" description="Polar residues" evidence="3">
    <location>
        <begin position="67"/>
        <end position="85"/>
    </location>
</feature>
<feature type="compositionally biased region" description="Basic and acidic residues" evidence="3">
    <location>
        <begin position="103"/>
        <end position="115"/>
    </location>
</feature>
<feature type="compositionally biased region" description="Polar residues" evidence="3">
    <location>
        <begin position="124"/>
        <end position="136"/>
    </location>
</feature>
<feature type="compositionally biased region" description="Basic and acidic residues" evidence="3">
    <location>
        <begin position="275"/>
        <end position="284"/>
    </location>
</feature>
<accession>B8NHF2</accession>
<keyword id="KW-0496">Mitochondrion</keyword>
<keyword id="KW-0809">Transit peptide</keyword>
<evidence type="ECO:0000250" key="1"/>
<evidence type="ECO:0000255" key="2"/>
<evidence type="ECO:0000256" key="3">
    <source>
        <dbReference type="SAM" id="MobiDB-lite"/>
    </source>
</evidence>
<evidence type="ECO:0000305" key="4"/>